<gene>
    <name evidence="1" type="primary">rpsU</name>
    <name type="ordered locus">BCI_0618</name>
</gene>
<organism>
    <name type="scientific">Baumannia cicadellinicola subsp. Homalodisca coagulata</name>
    <dbReference type="NCBI Taxonomy" id="374463"/>
    <lineage>
        <taxon>Bacteria</taxon>
        <taxon>Pseudomonadati</taxon>
        <taxon>Pseudomonadota</taxon>
        <taxon>Gammaproteobacteria</taxon>
        <taxon>Candidatus Palibaumannia</taxon>
    </lineage>
</organism>
<keyword id="KW-1185">Reference proteome</keyword>
<keyword id="KW-0687">Ribonucleoprotein</keyword>
<keyword id="KW-0689">Ribosomal protein</keyword>
<accession>Q1LSM1</accession>
<reference key="1">
    <citation type="journal article" date="2006" name="PLoS Biol.">
        <title>Metabolic complementarity and genomics of the dual bacterial symbiosis of sharpshooters.</title>
        <authorList>
            <person name="Wu D."/>
            <person name="Daugherty S.C."/>
            <person name="Van Aken S.E."/>
            <person name="Pai G.H."/>
            <person name="Watkins K.L."/>
            <person name="Khouri H."/>
            <person name="Tallon L.J."/>
            <person name="Zaborsky J.M."/>
            <person name="Dunbar H.E."/>
            <person name="Tran P.L."/>
            <person name="Moran N.A."/>
            <person name="Eisen J.A."/>
        </authorList>
    </citation>
    <scope>NUCLEOTIDE SEQUENCE [LARGE SCALE GENOMIC DNA]</scope>
</reference>
<comment type="similarity">
    <text evidence="1">Belongs to the bacterial ribosomal protein bS21 family.</text>
</comment>
<evidence type="ECO:0000255" key="1">
    <source>
        <dbReference type="HAMAP-Rule" id="MF_00358"/>
    </source>
</evidence>
<evidence type="ECO:0000305" key="2"/>
<name>RS21_BAUCH</name>
<dbReference type="EMBL" id="CP000238">
    <property type="protein sequence ID" value="ABF13798.1"/>
    <property type="molecule type" value="Genomic_DNA"/>
</dbReference>
<dbReference type="RefSeq" id="WP_011520776.1">
    <property type="nucleotide sequence ID" value="NC_007984.1"/>
</dbReference>
<dbReference type="SMR" id="Q1LSM1"/>
<dbReference type="STRING" id="374463.BCI_0618"/>
<dbReference type="KEGG" id="bci:BCI_0618"/>
<dbReference type="HOGENOM" id="CLU_159258_1_0_6"/>
<dbReference type="OrthoDB" id="9799244at2"/>
<dbReference type="Proteomes" id="UP000002427">
    <property type="component" value="Chromosome"/>
</dbReference>
<dbReference type="GO" id="GO:1990904">
    <property type="term" value="C:ribonucleoprotein complex"/>
    <property type="evidence" value="ECO:0007669"/>
    <property type="project" value="UniProtKB-KW"/>
</dbReference>
<dbReference type="GO" id="GO:0005840">
    <property type="term" value="C:ribosome"/>
    <property type="evidence" value="ECO:0007669"/>
    <property type="project" value="UniProtKB-KW"/>
</dbReference>
<dbReference type="GO" id="GO:0003735">
    <property type="term" value="F:structural constituent of ribosome"/>
    <property type="evidence" value="ECO:0007669"/>
    <property type="project" value="InterPro"/>
</dbReference>
<dbReference type="GO" id="GO:0006412">
    <property type="term" value="P:translation"/>
    <property type="evidence" value="ECO:0007669"/>
    <property type="project" value="UniProtKB-UniRule"/>
</dbReference>
<dbReference type="FunFam" id="1.20.5.1150:FF:000001">
    <property type="entry name" value="30S ribosomal protein S21"/>
    <property type="match status" value="1"/>
</dbReference>
<dbReference type="Gene3D" id="1.20.5.1150">
    <property type="entry name" value="Ribosomal protein S8"/>
    <property type="match status" value="1"/>
</dbReference>
<dbReference type="HAMAP" id="MF_00358">
    <property type="entry name" value="Ribosomal_bS21"/>
    <property type="match status" value="1"/>
</dbReference>
<dbReference type="InterPro" id="IPR001911">
    <property type="entry name" value="Ribosomal_bS21"/>
</dbReference>
<dbReference type="InterPro" id="IPR018278">
    <property type="entry name" value="Ribosomal_bS21_CS"/>
</dbReference>
<dbReference type="InterPro" id="IPR038380">
    <property type="entry name" value="Ribosomal_bS21_sf"/>
</dbReference>
<dbReference type="NCBIfam" id="TIGR00030">
    <property type="entry name" value="S21p"/>
    <property type="match status" value="1"/>
</dbReference>
<dbReference type="PANTHER" id="PTHR21109">
    <property type="entry name" value="MITOCHONDRIAL 28S RIBOSOMAL PROTEIN S21"/>
    <property type="match status" value="1"/>
</dbReference>
<dbReference type="PANTHER" id="PTHR21109:SF22">
    <property type="entry name" value="SMALL RIBOSOMAL SUBUNIT PROTEIN BS21"/>
    <property type="match status" value="1"/>
</dbReference>
<dbReference type="Pfam" id="PF01165">
    <property type="entry name" value="Ribosomal_S21"/>
    <property type="match status" value="1"/>
</dbReference>
<dbReference type="PRINTS" id="PR00976">
    <property type="entry name" value="RIBOSOMALS21"/>
</dbReference>
<dbReference type="PROSITE" id="PS01181">
    <property type="entry name" value="RIBOSOMAL_S21"/>
    <property type="match status" value="1"/>
</dbReference>
<sequence length="71" mass="8599">MPVIKVRDNEPFEVALRRFKRSCEKAGILSEVRRREFYEKPTTERKRAKASAVKRYTKKLARENARRNRLY</sequence>
<feature type="chain" id="PRO_0000266628" description="Small ribosomal subunit protein bS21">
    <location>
        <begin position="1"/>
        <end position="71"/>
    </location>
</feature>
<proteinExistence type="inferred from homology"/>
<protein>
    <recommendedName>
        <fullName evidence="1">Small ribosomal subunit protein bS21</fullName>
    </recommendedName>
    <alternativeName>
        <fullName evidence="2">30S ribosomal protein S21</fullName>
    </alternativeName>
</protein>